<protein>
    <recommendedName>
        <fullName>Protein BIG1</fullName>
    </recommendedName>
</protein>
<reference key="1">
    <citation type="journal article" date="2004" name="Nature">
        <title>Genome evolution in yeasts.</title>
        <authorList>
            <person name="Dujon B."/>
            <person name="Sherman D."/>
            <person name="Fischer G."/>
            <person name="Durrens P."/>
            <person name="Casaregola S."/>
            <person name="Lafontaine I."/>
            <person name="de Montigny J."/>
            <person name="Marck C."/>
            <person name="Neuveglise C."/>
            <person name="Talla E."/>
            <person name="Goffard N."/>
            <person name="Frangeul L."/>
            <person name="Aigle M."/>
            <person name="Anthouard V."/>
            <person name="Babour A."/>
            <person name="Barbe V."/>
            <person name="Barnay S."/>
            <person name="Blanchin S."/>
            <person name="Beckerich J.-M."/>
            <person name="Beyne E."/>
            <person name="Bleykasten C."/>
            <person name="Boisrame A."/>
            <person name="Boyer J."/>
            <person name="Cattolico L."/>
            <person name="Confanioleri F."/>
            <person name="de Daruvar A."/>
            <person name="Despons L."/>
            <person name="Fabre E."/>
            <person name="Fairhead C."/>
            <person name="Ferry-Dumazet H."/>
            <person name="Groppi A."/>
            <person name="Hantraye F."/>
            <person name="Hennequin C."/>
            <person name="Jauniaux N."/>
            <person name="Joyet P."/>
            <person name="Kachouri R."/>
            <person name="Kerrest A."/>
            <person name="Koszul R."/>
            <person name="Lemaire M."/>
            <person name="Lesur I."/>
            <person name="Ma L."/>
            <person name="Muller H."/>
            <person name="Nicaud J.-M."/>
            <person name="Nikolski M."/>
            <person name="Oztas S."/>
            <person name="Ozier-Kalogeropoulos O."/>
            <person name="Pellenz S."/>
            <person name="Potier S."/>
            <person name="Richard G.-F."/>
            <person name="Straub M.-L."/>
            <person name="Suleau A."/>
            <person name="Swennen D."/>
            <person name="Tekaia F."/>
            <person name="Wesolowski-Louvel M."/>
            <person name="Westhof E."/>
            <person name="Wirth B."/>
            <person name="Zeniou-Meyer M."/>
            <person name="Zivanovic Y."/>
            <person name="Bolotin-Fukuhara M."/>
            <person name="Thierry A."/>
            <person name="Bouchier C."/>
            <person name="Caudron B."/>
            <person name="Scarpelli C."/>
            <person name="Gaillardin C."/>
            <person name="Weissenbach J."/>
            <person name="Wincker P."/>
            <person name="Souciet J.-L."/>
        </authorList>
    </citation>
    <scope>NUCLEOTIDE SEQUENCE [LARGE SCALE GENOMIC DNA]</scope>
    <source>
        <strain>ATCC 36239 / CBS 767 / BCRC 21394 / JCM 1990 / NBRC 0083 / IGC 2968</strain>
    </source>
</reference>
<evidence type="ECO:0000250" key="1"/>
<evidence type="ECO:0000255" key="2"/>
<evidence type="ECO:0000305" key="3"/>
<gene>
    <name type="primary">BIG1</name>
    <name type="ordered locus">DEHA2G14542g</name>
</gene>
<comment type="function">
    <text evidence="1">Required for normal beta-1,6-glucan synthesis.</text>
</comment>
<comment type="subcellular location">
    <subcellularLocation>
        <location evidence="1">Endoplasmic reticulum membrane</location>
        <topology evidence="1">Single-pass type I membrane protein</topology>
    </subcellularLocation>
</comment>
<comment type="similarity">
    <text evidence="3">Belongs to the BIG1 family.</text>
</comment>
<keyword id="KW-0961">Cell wall biogenesis/degradation</keyword>
<keyword id="KW-0256">Endoplasmic reticulum</keyword>
<keyword id="KW-0325">Glycoprotein</keyword>
<keyword id="KW-0472">Membrane</keyword>
<keyword id="KW-1185">Reference proteome</keyword>
<keyword id="KW-0732">Signal</keyword>
<keyword id="KW-0812">Transmembrane</keyword>
<keyword id="KW-1133">Transmembrane helix</keyword>
<organism>
    <name type="scientific">Debaryomyces hansenii (strain ATCC 36239 / CBS 767 / BCRC 21394 / JCM 1990 / NBRC 0083 / IGC 2968)</name>
    <name type="common">Yeast</name>
    <name type="synonym">Torulaspora hansenii</name>
    <dbReference type="NCBI Taxonomy" id="284592"/>
    <lineage>
        <taxon>Eukaryota</taxon>
        <taxon>Fungi</taxon>
        <taxon>Dikarya</taxon>
        <taxon>Ascomycota</taxon>
        <taxon>Saccharomycotina</taxon>
        <taxon>Pichiomycetes</taxon>
        <taxon>Debaryomycetaceae</taxon>
        <taxon>Debaryomyces</taxon>
    </lineage>
</organism>
<name>BIG1_DEBHA</name>
<dbReference type="EMBL" id="CR382139">
    <property type="protein sequence ID" value="CAG90661.2"/>
    <property type="molecule type" value="Genomic_DNA"/>
</dbReference>
<dbReference type="RefSeq" id="XP_462173.2">
    <property type="nucleotide sequence ID" value="XM_462173.1"/>
</dbReference>
<dbReference type="FunCoup" id="Q6BHZ8">
    <property type="interactions" value="23"/>
</dbReference>
<dbReference type="STRING" id="284592.Q6BHZ8"/>
<dbReference type="GlyCosmos" id="Q6BHZ8">
    <property type="glycosylation" value="1 site, No reported glycans"/>
</dbReference>
<dbReference type="GeneID" id="2905090"/>
<dbReference type="KEGG" id="dha:DEHA2G14542g"/>
<dbReference type="VEuPathDB" id="FungiDB:DEHA2G14542g"/>
<dbReference type="eggNOG" id="ENOG502RXHV">
    <property type="taxonomic scope" value="Eukaryota"/>
</dbReference>
<dbReference type="HOGENOM" id="CLU_067894_0_0_1"/>
<dbReference type="InParanoid" id="Q6BHZ8"/>
<dbReference type="OMA" id="PNWNPIR"/>
<dbReference type="OrthoDB" id="9985059at2759"/>
<dbReference type="Proteomes" id="UP000000599">
    <property type="component" value="Chromosome G"/>
</dbReference>
<dbReference type="GO" id="GO:0005789">
    <property type="term" value="C:endoplasmic reticulum membrane"/>
    <property type="evidence" value="ECO:0007669"/>
    <property type="project" value="UniProtKB-SubCell"/>
</dbReference>
<dbReference type="GO" id="GO:0006078">
    <property type="term" value="P:(1-&gt;6)-beta-D-glucan biosynthetic process"/>
    <property type="evidence" value="ECO:0007669"/>
    <property type="project" value="TreeGrafter"/>
</dbReference>
<dbReference type="GO" id="GO:0071555">
    <property type="term" value="P:cell wall organization"/>
    <property type="evidence" value="ECO:0007669"/>
    <property type="project" value="UniProtKB-KW"/>
</dbReference>
<dbReference type="GO" id="GO:0009272">
    <property type="term" value="P:fungal-type cell wall biogenesis"/>
    <property type="evidence" value="ECO:0007669"/>
    <property type="project" value="TreeGrafter"/>
</dbReference>
<dbReference type="InterPro" id="IPR037654">
    <property type="entry name" value="Big1"/>
</dbReference>
<dbReference type="PANTHER" id="PTHR28285">
    <property type="entry name" value="PROTEIN BIG1"/>
    <property type="match status" value="1"/>
</dbReference>
<dbReference type="PANTHER" id="PTHR28285:SF1">
    <property type="entry name" value="PROTEIN BIG1"/>
    <property type="match status" value="1"/>
</dbReference>
<feature type="signal peptide" evidence="2">
    <location>
        <begin position="1"/>
        <end position="23"/>
    </location>
</feature>
<feature type="chain" id="PRO_0000277851" description="Protein BIG1">
    <location>
        <begin position="24"/>
        <end position="321"/>
    </location>
</feature>
<feature type="topological domain" description="Lumenal" evidence="2">
    <location>
        <begin position="24"/>
        <end position="279"/>
    </location>
</feature>
<feature type="transmembrane region" description="Helical" evidence="2">
    <location>
        <begin position="280"/>
        <end position="300"/>
    </location>
</feature>
<feature type="topological domain" description="Cytoplasmic" evidence="2">
    <location>
        <begin position="301"/>
        <end position="321"/>
    </location>
</feature>
<feature type="glycosylation site" description="N-linked (GlcNAc...) asparagine" evidence="2">
    <location>
        <position position="42"/>
    </location>
</feature>
<accession>Q6BHZ8</accession>
<sequence>MFISIRRLVALVAITQLVASFSAVPVLVASHRLAKGLKEELNGSGPQAPESATNLIKRLVTECSSDEYLVINQPGLVLEDMTVNEADNWPFLRRYIAMASSVVGIPWVRGALDLDFIEQYIISTCHAETMNVVHDDDQEVGNYIDTRTRVIKIDLSELPPRSDLELRYSVIREHDELIRKIIRKLPSPHYTIILTSDMPQNVHPIPNMVVESQPDKYQIFHDLVNDPSRELEIERNDRFHQTIEPYWSPDRNTINRYMENKKKDEIHFFDYDLWTRNEKLILTIIVMVLTLFTFQLTKLVKLLTETVFKKDKGLITHTKSE</sequence>
<proteinExistence type="inferred from homology"/>